<name>ATPE_ACIBS</name>
<gene>
    <name evidence="1" type="primary">atpC</name>
    <name type="ordered locus">ABSDF0171</name>
</gene>
<keyword id="KW-0066">ATP synthesis</keyword>
<keyword id="KW-0997">Cell inner membrane</keyword>
<keyword id="KW-1003">Cell membrane</keyword>
<keyword id="KW-0139">CF(1)</keyword>
<keyword id="KW-0375">Hydrogen ion transport</keyword>
<keyword id="KW-0406">Ion transport</keyword>
<keyword id="KW-0472">Membrane</keyword>
<keyword id="KW-0813">Transport</keyword>
<organism>
    <name type="scientific">Acinetobacter baumannii (strain SDF)</name>
    <dbReference type="NCBI Taxonomy" id="509170"/>
    <lineage>
        <taxon>Bacteria</taxon>
        <taxon>Pseudomonadati</taxon>
        <taxon>Pseudomonadota</taxon>
        <taxon>Gammaproteobacteria</taxon>
        <taxon>Moraxellales</taxon>
        <taxon>Moraxellaceae</taxon>
        <taxon>Acinetobacter</taxon>
        <taxon>Acinetobacter calcoaceticus/baumannii complex</taxon>
    </lineage>
</organism>
<feature type="chain" id="PRO_1000127816" description="ATP synthase epsilon chain">
    <location>
        <begin position="1"/>
        <end position="139"/>
    </location>
</feature>
<dbReference type="EMBL" id="CU468230">
    <property type="protein sequence ID" value="CAO99575.1"/>
    <property type="molecule type" value="Genomic_DNA"/>
</dbReference>
<dbReference type="SMR" id="B0VNK5"/>
<dbReference type="KEGG" id="abm:ABSDF0171"/>
<dbReference type="HOGENOM" id="CLU_084338_2_0_6"/>
<dbReference type="Proteomes" id="UP000001741">
    <property type="component" value="Chromosome"/>
</dbReference>
<dbReference type="GO" id="GO:0005886">
    <property type="term" value="C:plasma membrane"/>
    <property type="evidence" value="ECO:0007669"/>
    <property type="project" value="UniProtKB-SubCell"/>
</dbReference>
<dbReference type="GO" id="GO:0045259">
    <property type="term" value="C:proton-transporting ATP synthase complex"/>
    <property type="evidence" value="ECO:0007669"/>
    <property type="project" value="UniProtKB-KW"/>
</dbReference>
<dbReference type="GO" id="GO:0005524">
    <property type="term" value="F:ATP binding"/>
    <property type="evidence" value="ECO:0007669"/>
    <property type="project" value="UniProtKB-UniRule"/>
</dbReference>
<dbReference type="GO" id="GO:0046933">
    <property type="term" value="F:proton-transporting ATP synthase activity, rotational mechanism"/>
    <property type="evidence" value="ECO:0007669"/>
    <property type="project" value="UniProtKB-UniRule"/>
</dbReference>
<dbReference type="CDD" id="cd12152">
    <property type="entry name" value="F1-ATPase_delta"/>
    <property type="match status" value="1"/>
</dbReference>
<dbReference type="FunFam" id="2.60.15.10:FF:000001">
    <property type="entry name" value="ATP synthase epsilon chain"/>
    <property type="match status" value="1"/>
</dbReference>
<dbReference type="Gene3D" id="1.20.5.440">
    <property type="entry name" value="ATP synthase delta/epsilon subunit, C-terminal domain"/>
    <property type="match status" value="1"/>
</dbReference>
<dbReference type="Gene3D" id="2.60.15.10">
    <property type="entry name" value="F0F1 ATP synthase delta/epsilon subunit, N-terminal"/>
    <property type="match status" value="1"/>
</dbReference>
<dbReference type="HAMAP" id="MF_00530">
    <property type="entry name" value="ATP_synth_epsil_bac"/>
    <property type="match status" value="1"/>
</dbReference>
<dbReference type="InterPro" id="IPR036794">
    <property type="entry name" value="ATP_F1_dsu/esu_C_sf"/>
</dbReference>
<dbReference type="InterPro" id="IPR001469">
    <property type="entry name" value="ATP_synth_F1_dsu/esu"/>
</dbReference>
<dbReference type="InterPro" id="IPR020546">
    <property type="entry name" value="ATP_synth_F1_dsu/esu_N"/>
</dbReference>
<dbReference type="InterPro" id="IPR036771">
    <property type="entry name" value="ATPsynth_dsu/esu_N"/>
</dbReference>
<dbReference type="NCBIfam" id="TIGR01216">
    <property type="entry name" value="ATP_synt_epsi"/>
    <property type="match status" value="1"/>
</dbReference>
<dbReference type="NCBIfam" id="NF001847">
    <property type="entry name" value="PRK00571.1-4"/>
    <property type="match status" value="1"/>
</dbReference>
<dbReference type="PANTHER" id="PTHR13822">
    <property type="entry name" value="ATP SYNTHASE DELTA/EPSILON CHAIN"/>
    <property type="match status" value="1"/>
</dbReference>
<dbReference type="PANTHER" id="PTHR13822:SF10">
    <property type="entry name" value="ATP SYNTHASE EPSILON CHAIN, CHLOROPLASTIC"/>
    <property type="match status" value="1"/>
</dbReference>
<dbReference type="Pfam" id="PF02823">
    <property type="entry name" value="ATP-synt_DE_N"/>
    <property type="match status" value="1"/>
</dbReference>
<dbReference type="SUPFAM" id="SSF46604">
    <property type="entry name" value="Epsilon subunit of F1F0-ATP synthase C-terminal domain"/>
    <property type="match status" value="1"/>
</dbReference>
<dbReference type="SUPFAM" id="SSF51344">
    <property type="entry name" value="Epsilon subunit of F1F0-ATP synthase N-terminal domain"/>
    <property type="match status" value="1"/>
</dbReference>
<sequence length="139" mass="14555">MATMQCDVVSVKESLYSGAVTMLIAKGAGGELGILPGHAPLVTLLQLGPIRVLLENGTEEIVYVSGGVLEVQPHVVTVLADTAIRADNLDEAAILEARKNAEQLLANQKSDLDSAAALAALAETAAQLETIRKIKNRAQ</sequence>
<comment type="function">
    <text evidence="1">Produces ATP from ADP in the presence of a proton gradient across the membrane.</text>
</comment>
<comment type="subunit">
    <text evidence="1">F-type ATPases have 2 components, CF(1) - the catalytic core - and CF(0) - the membrane proton channel. CF(1) has five subunits: alpha(3), beta(3), gamma(1), delta(1), epsilon(1). CF(0) has three main subunits: a, b and c.</text>
</comment>
<comment type="subcellular location">
    <subcellularLocation>
        <location evidence="1">Cell inner membrane</location>
        <topology evidence="1">Peripheral membrane protein</topology>
    </subcellularLocation>
</comment>
<comment type="similarity">
    <text evidence="1">Belongs to the ATPase epsilon chain family.</text>
</comment>
<protein>
    <recommendedName>
        <fullName evidence="1">ATP synthase epsilon chain</fullName>
    </recommendedName>
    <alternativeName>
        <fullName evidence="1">ATP synthase F1 sector epsilon subunit</fullName>
    </alternativeName>
    <alternativeName>
        <fullName evidence="1">F-ATPase epsilon subunit</fullName>
    </alternativeName>
</protein>
<evidence type="ECO:0000255" key="1">
    <source>
        <dbReference type="HAMAP-Rule" id="MF_00530"/>
    </source>
</evidence>
<reference key="1">
    <citation type="journal article" date="2008" name="PLoS ONE">
        <title>Comparative analysis of Acinetobacters: three genomes for three lifestyles.</title>
        <authorList>
            <person name="Vallenet D."/>
            <person name="Nordmann P."/>
            <person name="Barbe V."/>
            <person name="Poirel L."/>
            <person name="Mangenot S."/>
            <person name="Bataille E."/>
            <person name="Dossat C."/>
            <person name="Gas S."/>
            <person name="Kreimeyer A."/>
            <person name="Lenoble P."/>
            <person name="Oztas S."/>
            <person name="Poulain J."/>
            <person name="Segurens B."/>
            <person name="Robert C."/>
            <person name="Abergel C."/>
            <person name="Claverie J.-M."/>
            <person name="Raoult D."/>
            <person name="Medigue C."/>
            <person name="Weissenbach J."/>
            <person name="Cruveiller S."/>
        </authorList>
    </citation>
    <scope>NUCLEOTIDE SEQUENCE [LARGE SCALE GENOMIC DNA]</scope>
    <source>
        <strain>SDF</strain>
    </source>
</reference>
<proteinExistence type="inferred from homology"/>
<accession>B0VNK5</accession>